<evidence type="ECO:0000250" key="1"/>
<evidence type="ECO:0000255" key="2">
    <source>
        <dbReference type="HAMAP-Rule" id="MF_01057"/>
    </source>
</evidence>
<evidence type="ECO:0000305" key="3"/>
<reference key="1">
    <citation type="journal article" date="1996" name="DNA Res.">
        <title>Sequence analysis of the genome of the unicellular cyanobacterium Synechocystis sp. strain PCC6803. II. Sequence determination of the entire genome and assignment of potential protein-coding regions.</title>
        <authorList>
            <person name="Kaneko T."/>
            <person name="Sato S."/>
            <person name="Kotani H."/>
            <person name="Tanaka A."/>
            <person name="Asamizu E."/>
            <person name="Nakamura Y."/>
            <person name="Miyajima N."/>
            <person name="Hirosawa M."/>
            <person name="Sugiura M."/>
            <person name="Sasamoto S."/>
            <person name="Kimura T."/>
            <person name="Hosouchi T."/>
            <person name="Matsuno A."/>
            <person name="Muraki A."/>
            <person name="Nakazaki N."/>
            <person name="Naruo K."/>
            <person name="Okumura S."/>
            <person name="Shimpo S."/>
            <person name="Takeuchi C."/>
            <person name="Wada T."/>
            <person name="Watanabe A."/>
            <person name="Yamada M."/>
            <person name="Yasuda M."/>
            <person name="Tabata S."/>
        </authorList>
    </citation>
    <scope>NUCLEOTIDE SEQUENCE [LARGE SCALE GENOMIC DNA]</scope>
    <source>
        <strain>ATCC 27184 / PCC 6803 / Kazusa</strain>
    </source>
</reference>
<name>TRMB_SYNY3</name>
<sequence length="211" mass="24416">MARVRIRQHVNPLSEKYRQVLACPDWATVYDDVQRPLHLDIGCARGRFPLKMAQQHPDWNFLGVEIRQPLVLEANETGDRLGLKNLHYLFGNINVEPEKFFSAFPPTLQRVSIQFPDPWFKQRHNKRRVAQPELVTAIANALPPGGEVLLQSDVEPVAQDMRDRFAENDNFVFTHDTPWLAENPLGVPTEREIACFNLQRPVYRCLLQRTP</sequence>
<keyword id="KW-0489">Methyltransferase</keyword>
<keyword id="KW-1185">Reference proteome</keyword>
<keyword id="KW-0949">S-adenosyl-L-methionine</keyword>
<keyword id="KW-0808">Transferase</keyword>
<keyword id="KW-0819">tRNA processing</keyword>
<feature type="chain" id="PRO_0000171412" description="tRNA (guanine-N(7)-)-methyltransferase">
    <location>
        <begin position="1"/>
        <end position="211"/>
    </location>
</feature>
<feature type="region of interest" description="Interaction with RNA" evidence="2">
    <location>
        <begin position="123"/>
        <end position="128"/>
    </location>
</feature>
<feature type="active site" evidence="1">
    <location>
        <position position="117"/>
    </location>
</feature>
<feature type="binding site" evidence="2">
    <location>
        <position position="40"/>
    </location>
    <ligand>
        <name>S-adenosyl-L-methionine</name>
        <dbReference type="ChEBI" id="CHEBI:59789"/>
    </ligand>
</feature>
<feature type="binding site" evidence="2">
    <location>
        <position position="65"/>
    </location>
    <ligand>
        <name>S-adenosyl-L-methionine</name>
        <dbReference type="ChEBI" id="CHEBI:59789"/>
    </ligand>
</feature>
<feature type="binding site" evidence="2">
    <location>
        <position position="92"/>
    </location>
    <ligand>
        <name>S-adenosyl-L-methionine</name>
        <dbReference type="ChEBI" id="CHEBI:59789"/>
    </ligand>
</feature>
<feature type="binding site" evidence="2">
    <location>
        <position position="117"/>
    </location>
    <ligand>
        <name>S-adenosyl-L-methionine</name>
        <dbReference type="ChEBI" id="CHEBI:59789"/>
    </ligand>
</feature>
<feature type="binding site" evidence="2">
    <location>
        <position position="121"/>
    </location>
    <ligand>
        <name>substrate</name>
    </ligand>
</feature>
<feature type="binding site" evidence="2">
    <location>
        <position position="153"/>
    </location>
    <ligand>
        <name>substrate</name>
    </ligand>
</feature>
<accession>P73161</accession>
<dbReference type="EC" id="2.1.1.33" evidence="2"/>
<dbReference type="EMBL" id="BA000022">
    <property type="protein sequence ID" value="BAA17187.1"/>
    <property type="status" value="ALT_INIT"/>
    <property type="molecule type" value="Genomic_DNA"/>
</dbReference>
<dbReference type="PIR" id="S75273">
    <property type="entry name" value="S75273"/>
</dbReference>
<dbReference type="SMR" id="P73161"/>
<dbReference type="FunCoup" id="P73161">
    <property type="interactions" value="320"/>
</dbReference>
<dbReference type="STRING" id="1148.gene:10498050"/>
<dbReference type="PaxDb" id="1148-1652264"/>
<dbReference type="EnsemblBacteria" id="BAA17187">
    <property type="protein sequence ID" value="BAA17187"/>
    <property type="gene ID" value="BAA17187"/>
</dbReference>
<dbReference type="KEGG" id="syn:sll1300"/>
<dbReference type="eggNOG" id="COG0220">
    <property type="taxonomic scope" value="Bacteria"/>
</dbReference>
<dbReference type="InParanoid" id="P73161"/>
<dbReference type="PhylomeDB" id="P73161"/>
<dbReference type="UniPathway" id="UPA00989"/>
<dbReference type="Proteomes" id="UP000001425">
    <property type="component" value="Chromosome"/>
</dbReference>
<dbReference type="GO" id="GO:0043527">
    <property type="term" value="C:tRNA methyltransferase complex"/>
    <property type="evidence" value="ECO:0000318"/>
    <property type="project" value="GO_Central"/>
</dbReference>
<dbReference type="GO" id="GO:0008176">
    <property type="term" value="F:tRNA (guanine(46)-N7)-methyltransferase activity"/>
    <property type="evidence" value="ECO:0000318"/>
    <property type="project" value="GO_Central"/>
</dbReference>
<dbReference type="GO" id="GO:0036265">
    <property type="term" value="P:RNA (guanine-N7)-methylation"/>
    <property type="evidence" value="ECO:0000318"/>
    <property type="project" value="GO_Central"/>
</dbReference>
<dbReference type="GO" id="GO:0030488">
    <property type="term" value="P:tRNA methylation"/>
    <property type="evidence" value="ECO:0000318"/>
    <property type="project" value="GO_Central"/>
</dbReference>
<dbReference type="CDD" id="cd02440">
    <property type="entry name" value="AdoMet_MTases"/>
    <property type="match status" value="1"/>
</dbReference>
<dbReference type="FunFam" id="3.40.50.150:FF:000230">
    <property type="entry name" value="tRNA (Guanine-N(7)-)-methyltransferase"/>
    <property type="match status" value="1"/>
</dbReference>
<dbReference type="Gene3D" id="3.40.50.150">
    <property type="entry name" value="Vaccinia Virus protein VP39"/>
    <property type="match status" value="1"/>
</dbReference>
<dbReference type="HAMAP" id="MF_01057">
    <property type="entry name" value="tRNA_methyltr_TrmB"/>
    <property type="match status" value="1"/>
</dbReference>
<dbReference type="InterPro" id="IPR029063">
    <property type="entry name" value="SAM-dependent_MTases_sf"/>
</dbReference>
<dbReference type="InterPro" id="IPR003358">
    <property type="entry name" value="tRNA_(Gua-N-7)_MeTrfase_Trmb"/>
</dbReference>
<dbReference type="InterPro" id="IPR055361">
    <property type="entry name" value="tRNA_methyltr_TrmB_bact"/>
</dbReference>
<dbReference type="NCBIfam" id="TIGR00091">
    <property type="entry name" value="tRNA (guanosine(46)-N7)-methyltransferase TrmB"/>
    <property type="match status" value="1"/>
</dbReference>
<dbReference type="PANTHER" id="PTHR23417">
    <property type="entry name" value="3-DEOXY-D-MANNO-OCTULOSONIC-ACID TRANSFERASE/TRNA GUANINE-N 7 - -METHYLTRANSFERASE"/>
    <property type="match status" value="1"/>
</dbReference>
<dbReference type="PANTHER" id="PTHR23417:SF21">
    <property type="entry name" value="TRNA (GUANINE-N(7)-)-METHYLTRANSFERASE"/>
    <property type="match status" value="1"/>
</dbReference>
<dbReference type="Pfam" id="PF02390">
    <property type="entry name" value="Methyltransf_4"/>
    <property type="match status" value="1"/>
</dbReference>
<dbReference type="SUPFAM" id="SSF53335">
    <property type="entry name" value="S-adenosyl-L-methionine-dependent methyltransferases"/>
    <property type="match status" value="1"/>
</dbReference>
<dbReference type="PROSITE" id="PS51625">
    <property type="entry name" value="SAM_MT_TRMB"/>
    <property type="match status" value="1"/>
</dbReference>
<proteinExistence type="inferred from homology"/>
<protein>
    <recommendedName>
        <fullName evidence="2">tRNA (guanine-N(7)-)-methyltransferase</fullName>
        <ecNumber evidence="2">2.1.1.33</ecNumber>
    </recommendedName>
    <alternativeName>
        <fullName evidence="2">tRNA (guanine(46)-N(7))-methyltransferase</fullName>
    </alternativeName>
    <alternativeName>
        <fullName evidence="2">tRNA(m7G46)-methyltransferase</fullName>
    </alternativeName>
</protein>
<comment type="function">
    <text evidence="2">Catalyzes the formation of N(7)-methylguanine at position 46 (m7G46) in tRNA.</text>
</comment>
<comment type="catalytic activity">
    <reaction evidence="2">
        <text>guanosine(46) in tRNA + S-adenosyl-L-methionine = N(7)-methylguanosine(46) in tRNA + S-adenosyl-L-homocysteine</text>
        <dbReference type="Rhea" id="RHEA:42708"/>
        <dbReference type="Rhea" id="RHEA-COMP:10188"/>
        <dbReference type="Rhea" id="RHEA-COMP:10189"/>
        <dbReference type="ChEBI" id="CHEBI:57856"/>
        <dbReference type="ChEBI" id="CHEBI:59789"/>
        <dbReference type="ChEBI" id="CHEBI:74269"/>
        <dbReference type="ChEBI" id="CHEBI:74480"/>
        <dbReference type="EC" id="2.1.1.33"/>
    </reaction>
</comment>
<comment type="pathway">
    <text evidence="2">tRNA modification; N(7)-methylguanine-tRNA biosynthesis.</text>
</comment>
<comment type="similarity">
    <text evidence="2">Belongs to the class I-like SAM-binding methyltransferase superfamily. TrmB family.</text>
</comment>
<comment type="sequence caution" evidence="3">
    <conflict type="erroneous initiation">
        <sequence resource="EMBL-CDS" id="BAA17187"/>
    </conflict>
</comment>
<organism>
    <name type="scientific">Synechocystis sp. (strain ATCC 27184 / PCC 6803 / Kazusa)</name>
    <dbReference type="NCBI Taxonomy" id="1111708"/>
    <lineage>
        <taxon>Bacteria</taxon>
        <taxon>Bacillati</taxon>
        <taxon>Cyanobacteriota</taxon>
        <taxon>Cyanophyceae</taxon>
        <taxon>Synechococcales</taxon>
        <taxon>Merismopediaceae</taxon>
        <taxon>Synechocystis</taxon>
    </lineage>
</organism>
<gene>
    <name evidence="2" type="primary">trmB</name>
    <name type="ordered locus">sll1300</name>
</gene>